<protein>
    <recommendedName>
        <fullName>Uncharacterized protein in phbA 5'region</fullName>
    </recommendedName>
    <alternativeName>
        <fullName>ORF4</fullName>
    </alternativeName>
</protein>
<proteinExistence type="predicted"/>
<reference key="1">
    <citation type="journal article" date="1993" name="Appl. Microbiol. Biotechnol.">
        <title>Cloning and molecular analysis of the poly(3-hydroxybutyric acid) biosynthetic genes of Thiocystis violacea.</title>
        <authorList>
            <person name="Liebergesell M."/>
            <person name="Steinbuechel A."/>
        </authorList>
    </citation>
    <scope>NUCLEOTIDE SEQUENCE [GENOMIC DNA]</scope>
    <source>
        <strain>2311 / DSM 208</strain>
    </source>
</reference>
<sequence>MNSDRIIKKYPNRRLYDTEVSRYITLADVRNLVMDCTSFKVVDTANESDITRSILLQIMLEEETGGEPLFSASMLAQIIRFYGGTLQGMFARYLESSLDLFAKQQQDMTKTLGDNPFEAMTRMTQKNVEIWADMQEEF</sequence>
<name>YPH4_THIVI</name>
<dbReference type="EMBL" id="L01113">
    <property type="protein sequence ID" value="AAB02859.1"/>
    <property type="molecule type" value="Genomic_DNA"/>
</dbReference>
<dbReference type="EMBL" id="S54369">
    <property type="protein sequence ID" value="AAC60427.1"/>
    <property type="molecule type" value="Genomic_DNA"/>
</dbReference>
<dbReference type="PIR" id="A48376">
    <property type="entry name" value="A48376"/>
</dbReference>
<dbReference type="SMR" id="P45368"/>
<dbReference type="GO" id="GO:0006355">
    <property type="term" value="P:regulation of DNA-templated transcription"/>
    <property type="evidence" value="ECO:0007669"/>
    <property type="project" value="InterPro"/>
</dbReference>
<dbReference type="InterPro" id="IPR012909">
    <property type="entry name" value="PHA_DNA-bd_N"/>
</dbReference>
<dbReference type="InterPro" id="IPR010134">
    <property type="entry name" value="PHA_reg_PhaR"/>
</dbReference>
<dbReference type="InterPro" id="IPR007897">
    <property type="entry name" value="PHB_accumulat"/>
</dbReference>
<dbReference type="NCBIfam" id="TIGR01848">
    <property type="entry name" value="PHA_reg_PhaR"/>
    <property type="match status" value="1"/>
</dbReference>
<dbReference type="Pfam" id="PF05233">
    <property type="entry name" value="PHB_acc"/>
    <property type="match status" value="1"/>
</dbReference>
<dbReference type="Pfam" id="PF07879">
    <property type="entry name" value="PHB_acc_N"/>
    <property type="match status" value="1"/>
</dbReference>
<accession>P45368</accession>
<feature type="chain" id="PRO_0000066403" description="Uncharacterized protein in phbA 5'region">
    <location>
        <begin position="1"/>
        <end position="138" status="greater than"/>
    </location>
</feature>
<feature type="non-terminal residue">
    <location>
        <position position="138"/>
    </location>
</feature>
<organism>
    <name type="scientific">Thiocystis violacea</name>
    <dbReference type="NCBI Taxonomy" id="13725"/>
    <lineage>
        <taxon>Bacteria</taxon>
        <taxon>Pseudomonadati</taxon>
        <taxon>Pseudomonadota</taxon>
        <taxon>Gammaproteobacteria</taxon>
        <taxon>Chromatiales</taxon>
        <taxon>Chromatiaceae</taxon>
        <taxon>Thiocystis</taxon>
    </lineage>
</organism>